<organism>
    <name type="scientific">Symbiobacterium thermophilum (strain DSM 24528 / JCM 14929 / IAM 14863 / T)</name>
    <dbReference type="NCBI Taxonomy" id="292459"/>
    <lineage>
        <taxon>Bacteria</taxon>
        <taxon>Bacillati</taxon>
        <taxon>Bacillota</taxon>
        <taxon>Clostridia</taxon>
        <taxon>Eubacteriales</taxon>
        <taxon>Symbiobacteriaceae</taxon>
        <taxon>Symbiobacterium</taxon>
    </lineage>
</organism>
<reference key="1">
    <citation type="journal article" date="2004" name="Nucleic Acids Res.">
        <title>Genome sequence of Symbiobacterium thermophilum, an uncultivable bacterium that depends on microbial commensalism.</title>
        <authorList>
            <person name="Ueda K."/>
            <person name="Yamashita A."/>
            <person name="Ishikawa J."/>
            <person name="Shimada M."/>
            <person name="Watsuji T."/>
            <person name="Morimura K."/>
            <person name="Ikeda H."/>
            <person name="Hattori M."/>
            <person name="Beppu T."/>
        </authorList>
    </citation>
    <scope>NUCLEOTIDE SEQUENCE [LARGE SCALE GENOMIC DNA]</scope>
    <source>
        <strain>DSM 24528 / JCM 14929 / IAM 14863 / T</strain>
    </source>
</reference>
<comment type="function">
    <text evidence="1">Catalyzes the isomerization between 2-isopropylmalate and 3-isopropylmalate, via the formation of 2-isopropylmaleate.</text>
</comment>
<comment type="catalytic activity">
    <reaction evidence="1">
        <text>(2R,3S)-3-isopropylmalate = (2S)-2-isopropylmalate</text>
        <dbReference type="Rhea" id="RHEA:32287"/>
        <dbReference type="ChEBI" id="CHEBI:1178"/>
        <dbReference type="ChEBI" id="CHEBI:35121"/>
        <dbReference type="EC" id="4.2.1.33"/>
    </reaction>
</comment>
<comment type="pathway">
    <text evidence="1">Amino-acid biosynthesis; L-leucine biosynthesis; L-leucine from 3-methyl-2-oxobutanoate: step 2/4.</text>
</comment>
<comment type="subunit">
    <text evidence="1">Heterodimer of LeuC and LeuD.</text>
</comment>
<comment type="similarity">
    <text evidence="1">Belongs to the LeuD family. LeuD type 1 subfamily.</text>
</comment>
<comment type="sequence caution" evidence="2">
    <conflict type="erroneous initiation">
        <sequence resource="EMBL-CDS" id="BAD41100"/>
    </conflict>
</comment>
<protein>
    <recommendedName>
        <fullName evidence="1">3-isopropylmalate dehydratase small subunit</fullName>
        <ecNumber evidence="1">4.2.1.33</ecNumber>
    </recommendedName>
    <alternativeName>
        <fullName evidence="1">Alpha-IPM isomerase</fullName>
        <shortName evidence="1">IPMI</shortName>
    </alternativeName>
    <alternativeName>
        <fullName evidence="1">Isopropylmalate isomerase</fullName>
    </alternativeName>
</protein>
<keyword id="KW-0028">Amino-acid biosynthesis</keyword>
<keyword id="KW-0100">Branched-chain amino acid biosynthesis</keyword>
<keyword id="KW-0432">Leucine biosynthesis</keyword>
<keyword id="KW-0456">Lyase</keyword>
<keyword id="KW-1185">Reference proteome</keyword>
<evidence type="ECO:0000255" key="1">
    <source>
        <dbReference type="HAMAP-Rule" id="MF_01031"/>
    </source>
</evidence>
<evidence type="ECO:0000305" key="2"/>
<sequence>MRPFTRETGLAVPLDRVNVDTDQIIPKQFLKRIERTGFGQFLFHDWRYLPDGSPNPEFVLNRPQYAGATILIAGRNFGSGSSREHAPWALSDYGFRAIIAPSFADIFYNNCFQNGLLPVVLPEEAVAELMRRAQEPGYRLTVDLERCVVEDDAGFRVDFAIDAFRRHRMLHGLDDIGLTLQYEDEIAAYEARRPAWLPTTPAR</sequence>
<accession>Q67MJ3</accession>
<gene>
    <name evidence="1" type="primary">leuD</name>
    <name type="ordered locus">STH2115</name>
</gene>
<name>LEUD_SYMTH</name>
<feature type="chain" id="PRO_0000141899" description="3-isopropylmalate dehydratase small subunit">
    <location>
        <begin position="1"/>
        <end position="203"/>
    </location>
</feature>
<dbReference type="EC" id="4.2.1.33" evidence="1"/>
<dbReference type="EMBL" id="AP006840">
    <property type="protein sequence ID" value="BAD41100.1"/>
    <property type="status" value="ALT_INIT"/>
    <property type="molecule type" value="Genomic_DNA"/>
</dbReference>
<dbReference type="RefSeq" id="WP_043713907.1">
    <property type="nucleotide sequence ID" value="NC_006177.1"/>
</dbReference>
<dbReference type="SMR" id="Q67MJ3"/>
<dbReference type="STRING" id="292459.STH2115"/>
<dbReference type="KEGG" id="sth:STH2115"/>
<dbReference type="eggNOG" id="COG0066">
    <property type="taxonomic scope" value="Bacteria"/>
</dbReference>
<dbReference type="HOGENOM" id="CLU_081378_0_3_9"/>
<dbReference type="OrthoDB" id="9777465at2"/>
<dbReference type="UniPathway" id="UPA00048">
    <property type="reaction ID" value="UER00071"/>
</dbReference>
<dbReference type="Proteomes" id="UP000000417">
    <property type="component" value="Chromosome"/>
</dbReference>
<dbReference type="GO" id="GO:0009316">
    <property type="term" value="C:3-isopropylmalate dehydratase complex"/>
    <property type="evidence" value="ECO:0007669"/>
    <property type="project" value="InterPro"/>
</dbReference>
<dbReference type="GO" id="GO:0003861">
    <property type="term" value="F:3-isopropylmalate dehydratase activity"/>
    <property type="evidence" value="ECO:0007669"/>
    <property type="project" value="UniProtKB-UniRule"/>
</dbReference>
<dbReference type="GO" id="GO:0009098">
    <property type="term" value="P:L-leucine biosynthetic process"/>
    <property type="evidence" value="ECO:0007669"/>
    <property type="project" value="UniProtKB-UniRule"/>
</dbReference>
<dbReference type="CDD" id="cd01577">
    <property type="entry name" value="IPMI_Swivel"/>
    <property type="match status" value="1"/>
</dbReference>
<dbReference type="FunFam" id="3.20.19.10:FF:000003">
    <property type="entry name" value="3-isopropylmalate dehydratase small subunit"/>
    <property type="match status" value="1"/>
</dbReference>
<dbReference type="Gene3D" id="3.20.19.10">
    <property type="entry name" value="Aconitase, domain 4"/>
    <property type="match status" value="1"/>
</dbReference>
<dbReference type="HAMAP" id="MF_01031">
    <property type="entry name" value="LeuD_type1"/>
    <property type="match status" value="1"/>
</dbReference>
<dbReference type="InterPro" id="IPR004431">
    <property type="entry name" value="3-IsopropMal_deHydase_ssu"/>
</dbReference>
<dbReference type="InterPro" id="IPR015928">
    <property type="entry name" value="Aconitase/3IPM_dehydase_swvl"/>
</dbReference>
<dbReference type="InterPro" id="IPR000573">
    <property type="entry name" value="AconitaseA/IPMdHydase_ssu_swvl"/>
</dbReference>
<dbReference type="InterPro" id="IPR033940">
    <property type="entry name" value="IPMI_Swivel"/>
</dbReference>
<dbReference type="InterPro" id="IPR050075">
    <property type="entry name" value="LeuD"/>
</dbReference>
<dbReference type="NCBIfam" id="TIGR00171">
    <property type="entry name" value="leuD"/>
    <property type="match status" value="1"/>
</dbReference>
<dbReference type="NCBIfam" id="NF002458">
    <property type="entry name" value="PRK01641.1"/>
    <property type="match status" value="1"/>
</dbReference>
<dbReference type="PANTHER" id="PTHR43345:SF5">
    <property type="entry name" value="3-ISOPROPYLMALATE DEHYDRATASE SMALL SUBUNIT"/>
    <property type="match status" value="1"/>
</dbReference>
<dbReference type="PANTHER" id="PTHR43345">
    <property type="entry name" value="3-ISOPROPYLMALATE DEHYDRATASE SMALL SUBUNIT 2-RELATED-RELATED"/>
    <property type="match status" value="1"/>
</dbReference>
<dbReference type="Pfam" id="PF00694">
    <property type="entry name" value="Aconitase_C"/>
    <property type="match status" value="1"/>
</dbReference>
<dbReference type="SUPFAM" id="SSF52016">
    <property type="entry name" value="LeuD/IlvD-like"/>
    <property type="match status" value="1"/>
</dbReference>
<proteinExistence type="inferred from homology"/>